<protein>
    <recommendedName>
        <fullName>Type III restriction-modification enzyme StyLTI Mod subunit</fullName>
        <shortName>M.StyLTI</shortName>
        <ecNumber evidence="4">2.1.1.72</ecNumber>
    </recommendedName>
    <alternativeName>
        <fullName>StyLTI methyltransferase</fullName>
    </alternativeName>
    <alternativeName>
        <fullName evidence="6 8">Type III methyltransferase M.StyLTI</fullName>
    </alternativeName>
</protein>
<accession>P40814</accession>
<name>T3MO_SALTY</name>
<dbReference type="EC" id="2.1.1.72" evidence="4"/>
<dbReference type="EMBL" id="M90544">
    <property type="status" value="NOT_ANNOTATED_CDS"/>
    <property type="molecule type" value="Genomic_DNA"/>
</dbReference>
<dbReference type="EMBL" id="AE006468">
    <property type="protein sequence ID" value="AAL19311.1"/>
    <property type="molecule type" value="Genomic_DNA"/>
</dbReference>
<dbReference type="PIR" id="JN0657">
    <property type="entry name" value="JN0657"/>
</dbReference>
<dbReference type="RefSeq" id="NP_459352.1">
    <property type="nucleotide sequence ID" value="NC_003197.2"/>
</dbReference>
<dbReference type="RefSeq" id="WP_000910371.1">
    <property type="nucleotide sequence ID" value="NC_003197.2"/>
</dbReference>
<dbReference type="SMR" id="P40814"/>
<dbReference type="STRING" id="99287.STM0357"/>
<dbReference type="REBASE" id="165434">
    <property type="entry name" value="M.Fba101ORF2038P"/>
</dbReference>
<dbReference type="REBASE" id="203812">
    <property type="entry name" value="M.Keu1446ORF2697P"/>
</dbReference>
<dbReference type="REBASE" id="231846">
    <property type="entry name" value="M.Sen4024ORF3354P"/>
</dbReference>
<dbReference type="REBASE" id="233833">
    <property type="entry name" value="M.Sen4839ORF3406P"/>
</dbReference>
<dbReference type="REBASE" id="3515">
    <property type="entry name" value="M.SenLT7I"/>
</dbReference>
<dbReference type="PaxDb" id="99287-STM0357"/>
<dbReference type="GeneID" id="1251876"/>
<dbReference type="KEGG" id="stm:STM0357"/>
<dbReference type="PATRIC" id="fig|99287.12.peg.378"/>
<dbReference type="HOGENOM" id="CLU_020164_2_0_6"/>
<dbReference type="OMA" id="KKLFPAC"/>
<dbReference type="PhylomeDB" id="P40814"/>
<dbReference type="BioCyc" id="SENT99287:STM0357-MONOMER"/>
<dbReference type="PRO" id="PR:P40814"/>
<dbReference type="Proteomes" id="UP000001014">
    <property type="component" value="Chromosome"/>
</dbReference>
<dbReference type="GO" id="GO:0005737">
    <property type="term" value="C:cytoplasm"/>
    <property type="evidence" value="ECO:0000318"/>
    <property type="project" value="GO_Central"/>
</dbReference>
<dbReference type="GO" id="GO:0003677">
    <property type="term" value="F:DNA binding"/>
    <property type="evidence" value="ECO:0007669"/>
    <property type="project" value="UniProtKB-KW"/>
</dbReference>
<dbReference type="GO" id="GO:0008168">
    <property type="term" value="F:methyltransferase activity"/>
    <property type="evidence" value="ECO:0000318"/>
    <property type="project" value="GO_Central"/>
</dbReference>
<dbReference type="GO" id="GO:0008170">
    <property type="term" value="F:N-methyltransferase activity"/>
    <property type="evidence" value="ECO:0007669"/>
    <property type="project" value="InterPro"/>
</dbReference>
<dbReference type="GO" id="GO:0009007">
    <property type="term" value="F:site-specific DNA-methyltransferase (adenine-specific) activity"/>
    <property type="evidence" value="ECO:0007669"/>
    <property type="project" value="UniProtKB-EC"/>
</dbReference>
<dbReference type="GO" id="GO:0009307">
    <property type="term" value="P:DNA restriction-modification system"/>
    <property type="evidence" value="ECO:0007669"/>
    <property type="project" value="UniProtKB-KW"/>
</dbReference>
<dbReference type="GO" id="GO:0032259">
    <property type="term" value="P:methylation"/>
    <property type="evidence" value="ECO:0007669"/>
    <property type="project" value="UniProtKB-KW"/>
</dbReference>
<dbReference type="Gene3D" id="3.40.50.150">
    <property type="entry name" value="Vaccinia Virus protein VP39"/>
    <property type="match status" value="1"/>
</dbReference>
<dbReference type="InterPro" id="IPR002941">
    <property type="entry name" value="DNA_methylase_N4/N6"/>
</dbReference>
<dbReference type="InterPro" id="IPR002052">
    <property type="entry name" value="DNA_methylase_N6_adenine_CS"/>
</dbReference>
<dbReference type="InterPro" id="IPR002295">
    <property type="entry name" value="N4/N6-MTase_EcoPI_Mod-like"/>
</dbReference>
<dbReference type="InterPro" id="IPR029063">
    <property type="entry name" value="SAM-dependent_MTases_sf"/>
</dbReference>
<dbReference type="InterPro" id="IPR041405">
    <property type="entry name" value="T3RM_EcoP15I_C"/>
</dbReference>
<dbReference type="Pfam" id="PF01555">
    <property type="entry name" value="N6_N4_Mtase"/>
    <property type="match status" value="1"/>
</dbReference>
<dbReference type="Pfam" id="PF18273">
    <property type="entry name" value="T3RM_EcoP15I_C"/>
    <property type="match status" value="1"/>
</dbReference>
<dbReference type="PIRSF" id="PIRSF015855">
    <property type="entry name" value="TypeIII_Mtase_mKpnI"/>
    <property type="match status" value="1"/>
</dbReference>
<dbReference type="PRINTS" id="PR00506">
    <property type="entry name" value="D21N6MTFRASE"/>
</dbReference>
<dbReference type="SUPFAM" id="SSF53335">
    <property type="entry name" value="S-adenosyl-L-methionine-dependent methyltransferases"/>
    <property type="match status" value="1"/>
</dbReference>
<dbReference type="PROSITE" id="PS00092">
    <property type="entry name" value="N6_MTASE"/>
    <property type="match status" value="1"/>
</dbReference>
<evidence type="ECO:0000250" key="1">
    <source>
        <dbReference type="UniProtKB" id="P12364"/>
    </source>
</evidence>
<evidence type="ECO:0000255" key="2"/>
<evidence type="ECO:0000269" key="3">
    <source>
    </source>
</evidence>
<evidence type="ECO:0000269" key="4">
    <source>
    </source>
</evidence>
<evidence type="ECO:0000269" key="5">
    <source>
    </source>
</evidence>
<evidence type="ECO:0000303" key="6">
    <source>
    </source>
</evidence>
<evidence type="ECO:0000303" key="7">
    <source>
    </source>
</evidence>
<evidence type="ECO:0000303" key="8">
    <source>
    </source>
</evidence>
<evidence type="ECO:0000305" key="9"/>
<proteinExistence type="evidence at protein level"/>
<sequence length="652" mass="73336">MLKDNQKHNESVAPNSAFLSELQRALPEFFTADRYNEQGELIAKGGFDLARFERALKARNIDELTSGYQIDFIGKDYAKKQAGEKSVTVIVPDVEHNTLAENKNSHNLFLTGDNLDVLRHLQNNYADTVDMIYIDPPYNTGSDGFVYPDHFEYSDRALQDMFGLNDTELARLKSIQGKSTHSAWLSFMYPRLFLARKLLKDTGFIFISIDDNEYANLKLMMDEIFGEGGFVTNVMWKRKKEISNDSDNVSIQGEYILVYAKTGQGALRLEPLSKEYIQKSYKEPTEQFPEGKWRPVPLTVSKGLSGGGYTYKITTPNGTVHERLWAYPEASYQKLVADNLVYFGKDNGGIPQRVMYAHHSKGQPTTNYWDNVASNKEGKKEILDLFGDNVFDTPKPTALLKKIIKLAIDKDGVVLDFFAGSGTTAHAVMALNEEDGGQRTFILCTIDQALSNNTIAKKAGYNTIDEISRERITRVAAKIRANNPATNSDLGFKHYRFATPTQQTLDDLDSFDIATGHFINTSGQLAAFTESGFTDMINPFSARGLGVPGGASGEETLLTTWLVADGYKMDIDVQTVDFSGYCARYVDNTRLYLIDERWGTEQTRDLLNHIGTHQLPVQTIVIYGYSFDLESIRELEIGLKQLDQKVNLVKRY</sequence>
<keyword id="KW-0238">DNA-binding</keyword>
<keyword id="KW-0489">Methyltransferase</keyword>
<keyword id="KW-1185">Reference proteome</keyword>
<keyword id="KW-0680">Restriction system</keyword>
<keyword id="KW-0949">S-adenosyl-L-methionine</keyword>
<keyword id="KW-0808">Transferase</keyword>
<gene>
    <name evidence="7" type="primary">mod</name>
    <name type="ordered locus">STM0357</name>
</gene>
<comment type="function">
    <text evidence="3 4 6">A beta subtype methylase that binds the system-specific DNA recognition site 5'-CAGAG-3' and methylates A-4 (of only 1 strand as the other does not have an A residue). DNA restriction requires both the Res and Mod subunits.</text>
</comment>
<comment type="catalytic activity">
    <reaction evidence="4">
        <text>a 2'-deoxyadenosine in DNA + S-adenosyl-L-methionine = an N(6)-methyl-2'-deoxyadenosine in DNA + S-adenosyl-L-homocysteine + H(+)</text>
        <dbReference type="Rhea" id="RHEA:15197"/>
        <dbReference type="Rhea" id="RHEA-COMP:12418"/>
        <dbReference type="Rhea" id="RHEA-COMP:12419"/>
        <dbReference type="ChEBI" id="CHEBI:15378"/>
        <dbReference type="ChEBI" id="CHEBI:57856"/>
        <dbReference type="ChEBI" id="CHEBI:59789"/>
        <dbReference type="ChEBI" id="CHEBI:90615"/>
        <dbReference type="ChEBI" id="CHEBI:90616"/>
        <dbReference type="EC" id="2.1.1.72"/>
    </reaction>
</comment>
<comment type="subunit">
    <text evidence="1">Homodimer, also forms a functional restriction-competent complex with Res.</text>
</comment>
<comment type="similarity">
    <text evidence="9">Belongs to the N(4)/N(6)-methyltransferase family.</text>
</comment>
<reference key="1">
    <citation type="journal article" date="1993" name="Gene">
        <title>Sequence of the Salmonella typhimurium StyLT1 restriction-modification genes: homologies with EcoP1 and EcoP15 type-III R-M systems and presence of helicase domains.</title>
        <authorList>
            <person name="Dartois V."/>
            <person name="de Backer O."/>
            <person name="Colson C."/>
        </authorList>
    </citation>
    <scope>NUCLEOTIDE SEQUENCE [GENOMIC DNA]</scope>
    <source>
        <strain>LT7</strain>
    </source>
</reference>
<reference key="2">
    <citation type="journal article" date="2001" name="Nature">
        <title>Complete genome sequence of Salmonella enterica serovar Typhimurium LT2.</title>
        <authorList>
            <person name="McClelland M."/>
            <person name="Sanderson K.E."/>
            <person name="Spieth J."/>
            <person name="Clifton S.W."/>
            <person name="Latreille P."/>
            <person name="Courtney L."/>
            <person name="Porwollik S."/>
            <person name="Ali J."/>
            <person name="Dante M."/>
            <person name="Du F."/>
            <person name="Hou S."/>
            <person name="Layman D."/>
            <person name="Leonard S."/>
            <person name="Nguyen C."/>
            <person name="Scott K."/>
            <person name="Holmes A."/>
            <person name="Grewal N."/>
            <person name="Mulvaney E."/>
            <person name="Ryan E."/>
            <person name="Sun H."/>
            <person name="Florea L."/>
            <person name="Miller W."/>
            <person name="Stoneking T."/>
            <person name="Nhan M."/>
            <person name="Waterston R."/>
            <person name="Wilson R.K."/>
        </authorList>
    </citation>
    <scope>NUCLEOTIDE SEQUENCE [LARGE SCALE GENOMIC DNA]</scope>
    <source>
        <strain>LT2 / SGSC1412 / ATCC 700720</strain>
    </source>
</reference>
<reference key="3">
    <citation type="journal article" date="1991" name="Gene">
        <title>Identification of the recognition sequence for the M.StyLTI methyltransferase of Salmonella typhimurium LT7: an asymmetric site typical of type-III enzymes.</title>
        <authorList>
            <person name="De Backer O."/>
            <person name="Colson C."/>
        </authorList>
    </citation>
    <scope>FUNCTION</scope>
    <scope>CATALYTIC ACTIVITY</scope>
    <source>
        <strain>LT7</strain>
    </source>
</reference>
<reference key="4">
    <citation type="journal article" date="1991" name="J. Bacteriol.">
        <title>Two-step cloning and expression in Escherichia coli of the DNA restriction-modification system StyLTI of Salmonella typhimurium.</title>
        <authorList>
            <person name="De Backer O."/>
            <person name="Colson C."/>
        </authorList>
    </citation>
    <scope>FUNCTION</scope>
    <source>
        <strain>LT7</strain>
    </source>
</reference>
<reference key="5">
    <citation type="journal article" date="2003" name="Nucleic Acids Res.">
        <title>A nomenclature for restriction enzymes, DNA methyltransferases, homing endonucleases and their genes.</title>
        <authorList>
            <person name="Roberts R.J."/>
            <person name="Belfort M."/>
            <person name="Bestor T."/>
            <person name="Bhagwat A.S."/>
            <person name="Bickle T.A."/>
            <person name="Bitinaite J."/>
            <person name="Blumenthal R.M."/>
            <person name="Degtyarev S.K."/>
            <person name="Dryden D.T."/>
            <person name="Dybvig K."/>
            <person name="Firman K."/>
            <person name="Gromova E.S."/>
            <person name="Gumport R.I."/>
            <person name="Halford S.E."/>
            <person name="Hattman S."/>
            <person name="Heitman J."/>
            <person name="Hornby D.P."/>
            <person name="Janulaitis A."/>
            <person name="Jeltsch A."/>
            <person name="Josephsen J."/>
            <person name="Kiss A."/>
            <person name="Klaenhammer T.R."/>
            <person name="Kobayashi I."/>
            <person name="Kong H."/>
            <person name="Krueger D.H."/>
            <person name="Lacks S."/>
            <person name="Marinus M.G."/>
            <person name="Miyahara M."/>
            <person name="Morgan R.D."/>
            <person name="Murray N.E."/>
            <person name="Nagaraja V."/>
            <person name="Piekarowicz A."/>
            <person name="Pingoud A."/>
            <person name="Raleigh E."/>
            <person name="Rao D.N."/>
            <person name="Reich N."/>
            <person name="Repin V.E."/>
            <person name="Selker E.U."/>
            <person name="Shaw P.C."/>
            <person name="Stein D.C."/>
            <person name="Stoddard B.L."/>
            <person name="Szybalski W."/>
            <person name="Trautner T.A."/>
            <person name="Van Etten J.L."/>
            <person name="Vitor J.M."/>
            <person name="Wilson G.G."/>
            <person name="Xu S.Y."/>
        </authorList>
    </citation>
    <scope>NOMENCLATURE</scope>
    <scope>SUBTYPE</scope>
</reference>
<feature type="chain" id="PRO_0000088032" description="Type III restriction-modification enzyme StyLTI Mod subunit">
    <location>
        <begin position="1"/>
        <end position="652"/>
    </location>
</feature>
<feature type="region of interest" description="Binding of S-adenosyl methionine" evidence="2">
    <location>
        <begin position="135"/>
        <end position="138"/>
    </location>
</feature>
<feature type="sequence variant" description="In strain: LT7." evidence="5">
    <location>
        <position position="55"/>
    </location>
</feature>
<feature type="sequence variant" description="In strain: LT7." evidence="5">
    <original>A</original>
    <variation>S</variation>
    <location>
        <position position="126"/>
    </location>
</feature>
<organism>
    <name type="scientific">Salmonella typhimurium (strain LT2 / SGSC1412 / ATCC 700720)</name>
    <dbReference type="NCBI Taxonomy" id="99287"/>
    <lineage>
        <taxon>Bacteria</taxon>
        <taxon>Pseudomonadati</taxon>
        <taxon>Pseudomonadota</taxon>
        <taxon>Gammaproteobacteria</taxon>
        <taxon>Enterobacterales</taxon>
        <taxon>Enterobacteriaceae</taxon>
        <taxon>Salmonella</taxon>
    </lineage>
</organism>